<comment type="function">
    <text evidence="1">Mitochondrial transcription factor that confers selective promoter recognition on the core subunit of the yeast mitochondrial RNA polymerase. Interacts with DNA in a non-specific manner (By similarity).</text>
</comment>
<comment type="subcellular location">
    <subcellularLocation>
        <location evidence="1">Mitochondrion</location>
    </subcellularLocation>
</comment>
<comment type="similarity">
    <text evidence="2">Belongs to the class I-like SAM-binding methyltransferase superfamily. rRNA adenine N(6)-methyltransferase family.</text>
</comment>
<gene>
    <name type="primary">MTF1</name>
</gene>
<sequence length="341" mass="39690">MSIPIPGIKDISKLKFFYGFKYLWNPTVYNRIFDKLDLTKTYKHPQELKVLDLYPGVGVQSAIFYNKYCPKQYSLIEKRSSLYKFLNAKFEESPLQILKKDPYDWSTYSSLIDEERIFVPEVQPSDHINDKFLTVANVTGEGSEGLIMQWLSCIGNKNWLYRFGKVKMLLWMPSTTAKKLLARPSTHARSKCSVVREAFTDTKLIAISDANELKGFDSHCIEEWDPVIFSAADIWPTKGKPIALVEMDPIDFDFDVDNWDYVTRHLMILKRTPLNTVMDSLGHGGQQYFNSRITDKDLIKKCPIDLTNDEFIYLTKLFMEWPFKPDILMDFVDMYQTEHSG</sequence>
<dbReference type="EC" id="2.1.1.-"/>
<dbReference type="EMBL" id="Y08739">
    <property type="protein sequence ID" value="CAA69994.1"/>
    <property type="molecule type" value="Genomic_DNA"/>
</dbReference>
<dbReference type="SMR" id="Q9Y829"/>
<dbReference type="VEuPathDB" id="FungiDB:SPAR_M03440"/>
<dbReference type="OrthoDB" id="16079at2759"/>
<dbReference type="GO" id="GO:0034245">
    <property type="term" value="C:mitochondrial DNA-directed RNA polymerase complex"/>
    <property type="evidence" value="ECO:0007669"/>
    <property type="project" value="TreeGrafter"/>
</dbReference>
<dbReference type="GO" id="GO:0005759">
    <property type="term" value="C:mitochondrial matrix"/>
    <property type="evidence" value="ECO:0007669"/>
    <property type="project" value="TreeGrafter"/>
</dbReference>
<dbReference type="GO" id="GO:0003677">
    <property type="term" value="F:DNA binding"/>
    <property type="evidence" value="ECO:0007669"/>
    <property type="project" value="UniProtKB-KW"/>
</dbReference>
<dbReference type="GO" id="GO:0008168">
    <property type="term" value="F:methyltransferase activity"/>
    <property type="evidence" value="ECO:0007669"/>
    <property type="project" value="UniProtKB-KW"/>
</dbReference>
<dbReference type="GO" id="GO:0034246">
    <property type="term" value="F:mitochondrial transcription factor activity"/>
    <property type="evidence" value="ECO:0007669"/>
    <property type="project" value="InterPro"/>
</dbReference>
<dbReference type="GO" id="GO:0003723">
    <property type="term" value="F:RNA binding"/>
    <property type="evidence" value="ECO:0007669"/>
    <property type="project" value="UniProtKB-KW"/>
</dbReference>
<dbReference type="GO" id="GO:0032259">
    <property type="term" value="P:methylation"/>
    <property type="evidence" value="ECO:0007669"/>
    <property type="project" value="UniProtKB-KW"/>
</dbReference>
<dbReference type="GO" id="GO:0006391">
    <property type="term" value="P:transcription initiation at mitochondrial promoter"/>
    <property type="evidence" value="ECO:0007669"/>
    <property type="project" value="InterPro"/>
</dbReference>
<dbReference type="FunFam" id="1.10.8.100:FF:000007">
    <property type="entry name" value="Mitochondrial transcription factor"/>
    <property type="match status" value="1"/>
</dbReference>
<dbReference type="FunFam" id="3.40.50.150:FF:000424">
    <property type="entry name" value="Mitochondrial transcription factor"/>
    <property type="match status" value="1"/>
</dbReference>
<dbReference type="Gene3D" id="1.10.8.100">
    <property type="entry name" value="Ribosomal RNA adenine dimethylase-like, domain 2"/>
    <property type="match status" value="1"/>
</dbReference>
<dbReference type="Gene3D" id="3.40.50.150">
    <property type="entry name" value="Vaccinia Virus protein VP39"/>
    <property type="match status" value="1"/>
</dbReference>
<dbReference type="InterPro" id="IPR001737">
    <property type="entry name" value="KsgA/Erm"/>
</dbReference>
<dbReference type="InterPro" id="IPR016586">
    <property type="entry name" value="Mtf1"/>
</dbReference>
<dbReference type="InterPro" id="IPR023165">
    <property type="entry name" value="rRNA_Ade_diMease-like_C"/>
</dbReference>
<dbReference type="InterPro" id="IPR029063">
    <property type="entry name" value="SAM-dependent_MTases_sf"/>
</dbReference>
<dbReference type="PANTHER" id="PTHR11727">
    <property type="entry name" value="DIMETHYLADENOSINE TRANSFERASE"/>
    <property type="match status" value="1"/>
</dbReference>
<dbReference type="PANTHER" id="PTHR11727:SF17">
    <property type="entry name" value="DIMETHYLADENOSINE TRANSFERASE 1, MITOCHONDRIAL"/>
    <property type="match status" value="1"/>
</dbReference>
<dbReference type="Pfam" id="PF00398">
    <property type="entry name" value="RrnaAD"/>
    <property type="match status" value="1"/>
</dbReference>
<dbReference type="PIRSF" id="PIRSF011649">
    <property type="entry name" value="MtTFB"/>
    <property type="match status" value="1"/>
</dbReference>
<dbReference type="SUPFAM" id="SSF53335">
    <property type="entry name" value="S-adenosyl-L-methionine-dependent methyltransferases"/>
    <property type="match status" value="1"/>
</dbReference>
<dbReference type="PROSITE" id="PS51689">
    <property type="entry name" value="SAM_RNA_A_N6_MT"/>
    <property type="match status" value="1"/>
</dbReference>
<accession>Q9Y829</accession>
<protein>
    <recommendedName>
        <fullName>Mitochondrial transcription factor 1</fullName>
        <ecNumber>2.1.1.-</ecNumber>
    </recommendedName>
    <alternativeName>
        <fullName>Mitochondrial transcription factor mtTFB</fullName>
    </alternativeName>
</protein>
<evidence type="ECO:0000250" key="1"/>
<evidence type="ECO:0000255" key="2">
    <source>
        <dbReference type="PROSITE-ProRule" id="PRU01026"/>
    </source>
</evidence>
<proteinExistence type="inferred from homology"/>
<keyword id="KW-0238">DNA-binding</keyword>
<keyword id="KW-0489">Methyltransferase</keyword>
<keyword id="KW-0496">Mitochondrion</keyword>
<keyword id="KW-0694">RNA-binding</keyword>
<keyword id="KW-0949">S-adenosyl-L-methionine</keyword>
<keyword id="KW-0804">Transcription</keyword>
<keyword id="KW-0805">Transcription regulation</keyword>
<keyword id="KW-0808">Transferase</keyword>
<organism>
    <name type="scientific">Saccharomyces paradoxus</name>
    <name type="common">Yeast</name>
    <name type="synonym">Saccharomyces douglasii</name>
    <dbReference type="NCBI Taxonomy" id="27291"/>
    <lineage>
        <taxon>Eukaryota</taxon>
        <taxon>Fungi</taxon>
        <taxon>Dikarya</taxon>
        <taxon>Ascomycota</taxon>
        <taxon>Saccharomycotina</taxon>
        <taxon>Saccharomycetes</taxon>
        <taxon>Saccharomycetales</taxon>
        <taxon>Saccharomycetaceae</taxon>
        <taxon>Saccharomyces</taxon>
    </lineage>
</organism>
<reference key="1">
    <citation type="submission" date="1996-10" db="EMBL/GenBank/DDBJ databases">
        <title>Expression studies and promoter analysis of the nuclear gene for mitochondrial transcription factor 1 (MTF1) in yeast.</title>
        <authorList>
            <person name="Stein T."/>
            <person name="Jan P.S."/>
            <person name="Hehl S."/>
            <person name="Lisowsky T."/>
        </authorList>
    </citation>
    <scope>NUCLEOTIDE SEQUENCE [GENOMIC DNA]</scope>
    <source>
        <strain>4301-3A</strain>
    </source>
</reference>
<name>MTF1_SACPA</name>
<feature type="initiator methionine" description="Removed" evidence="1">
    <location>
        <position position="1"/>
    </location>
</feature>
<feature type="chain" id="PRO_0000096619" description="Mitochondrial transcription factor 1">
    <location>
        <begin position="2"/>
        <end position="341"/>
    </location>
</feature>
<feature type="binding site" evidence="2">
    <location>
        <position position="23"/>
    </location>
    <ligand>
        <name>S-adenosyl-L-methionine</name>
        <dbReference type="ChEBI" id="CHEBI:59789"/>
    </ligand>
</feature>
<feature type="binding site" evidence="2">
    <location>
        <position position="77"/>
    </location>
    <ligand>
        <name>S-adenosyl-L-methionine</name>
        <dbReference type="ChEBI" id="CHEBI:59789"/>
    </ligand>
</feature>
<feature type="binding site" evidence="2">
    <location>
        <position position="101"/>
    </location>
    <ligand>
        <name>S-adenosyl-L-methionine</name>
        <dbReference type="ChEBI" id="CHEBI:59789"/>
    </ligand>
</feature>
<feature type="binding site" evidence="2">
    <location>
        <position position="137"/>
    </location>
    <ligand>
        <name>S-adenosyl-L-methionine</name>
        <dbReference type="ChEBI" id="CHEBI:59789"/>
    </ligand>
</feature>